<keyword id="KW-0002">3D-structure</keyword>
<keyword id="KW-0479">Metal-binding</keyword>
<keyword id="KW-0687">Ribonucleoprotein</keyword>
<keyword id="KW-0689">Ribosomal protein</keyword>
<keyword id="KW-0694">RNA-binding</keyword>
<keyword id="KW-0699">rRNA-binding</keyword>
<keyword id="KW-0862">Zinc</keyword>
<keyword id="KW-0863">Zinc-finger</keyword>
<proteinExistence type="evidence at protein level"/>
<comment type="function">
    <text evidence="1">One of the primary rRNA binding proteins, it binds directly to 16S rRNA where it helps nucleate assembly of the body and platform of the 30S subunit.</text>
</comment>
<comment type="cofactor">
    <cofactor evidence="1">
        <name>Zn(2+)</name>
        <dbReference type="ChEBI" id="CHEBI:29105"/>
    </cofactor>
    <text evidence="1">Binds 1 zinc ion per subunit.</text>
</comment>
<comment type="subunit">
    <text evidence="1">Part of the 30S ribosomal subunit. Contacts protein S5. The interaction surface between S4 and S5 is involved in control of translational fidelity (By similarity).</text>
</comment>
<comment type="similarity">
    <text evidence="2">Belongs to the universal ribosomal protein uS4 family.</text>
</comment>
<name>RS4_THET2</name>
<dbReference type="EMBL" id="AE017221">
    <property type="protein sequence ID" value="AAS81643.1"/>
    <property type="molecule type" value="Genomic_DNA"/>
</dbReference>
<dbReference type="RefSeq" id="WP_011173699.1">
    <property type="nucleotide sequence ID" value="NC_005835.1"/>
</dbReference>
<dbReference type="PDB" id="4KVB">
    <property type="method" value="X-ray"/>
    <property type="resolution" value="4.20 A"/>
    <property type="chains" value="D=1-209"/>
</dbReference>
<dbReference type="PDB" id="4V4I">
    <property type="method" value="X-ray"/>
    <property type="resolution" value="3.71 A"/>
    <property type="chains" value="e=1-209"/>
</dbReference>
<dbReference type="PDB" id="4V4J">
    <property type="method" value="X-ray"/>
    <property type="resolution" value="3.83 A"/>
    <property type="chains" value="e=1-209"/>
</dbReference>
<dbReference type="PDB" id="4V63">
    <property type="method" value="X-ray"/>
    <property type="resolution" value="3.21 A"/>
    <property type="chains" value="AD/CD=1-209"/>
</dbReference>
<dbReference type="PDB" id="4V67">
    <property type="method" value="X-ray"/>
    <property type="resolution" value="3.00 A"/>
    <property type="chains" value="AD/CD=1-209"/>
</dbReference>
<dbReference type="PDB" id="4V7P">
    <property type="method" value="X-ray"/>
    <property type="resolution" value="3.62 A"/>
    <property type="chains" value="AD/DD=2-209"/>
</dbReference>
<dbReference type="PDB" id="4V83">
    <property type="method" value="X-ray"/>
    <property type="resolution" value="3.50 A"/>
    <property type="chains" value="AD/CD=2-209"/>
</dbReference>
<dbReference type="PDB" id="4V84">
    <property type="method" value="X-ray"/>
    <property type="resolution" value="3.40 A"/>
    <property type="chains" value="AD/CD=2-209"/>
</dbReference>
<dbReference type="PDB" id="4V9J">
    <property type="method" value="X-ray"/>
    <property type="resolution" value="3.86 A"/>
    <property type="chains" value="AD/CD=2-209"/>
</dbReference>
<dbReference type="PDB" id="4V9K">
    <property type="method" value="X-ray"/>
    <property type="resolution" value="3.50 A"/>
    <property type="chains" value="AD/CD=2-209"/>
</dbReference>
<dbReference type="PDB" id="4V9L">
    <property type="method" value="X-ray"/>
    <property type="resolution" value="3.50 A"/>
    <property type="chains" value="AD/CD=2-209"/>
</dbReference>
<dbReference type="PDB" id="4V9M">
    <property type="method" value="X-ray"/>
    <property type="resolution" value="4.00 A"/>
    <property type="chains" value="AD/CD=2-209"/>
</dbReference>
<dbReference type="PDB" id="4V9N">
    <property type="method" value="X-ray"/>
    <property type="resolution" value="3.40 A"/>
    <property type="chains" value="AD/CD=2-209"/>
</dbReference>
<dbReference type="PDB" id="4V9Q">
    <property type="method" value="X-ray"/>
    <property type="resolution" value="3.40 A"/>
    <property type="chains" value="BD/DD=2-209"/>
</dbReference>
<dbReference type="PDB" id="4W29">
    <property type="method" value="X-ray"/>
    <property type="resolution" value="3.80 A"/>
    <property type="chains" value="AD/CD=2-209"/>
</dbReference>
<dbReference type="PDB" id="4XEJ">
    <property type="method" value="X-ray"/>
    <property type="resolution" value="3.80 A"/>
    <property type="chains" value="AS04/BS04=2-209"/>
</dbReference>
<dbReference type="PDB" id="5J4D">
    <property type="method" value="X-ray"/>
    <property type="resolution" value="3.10 A"/>
    <property type="chains" value="MA/RC=1-209"/>
</dbReference>
<dbReference type="PDB" id="5V8I">
    <property type="method" value="X-ray"/>
    <property type="resolution" value="3.25 A"/>
    <property type="chains" value="1d/2d=1-209"/>
</dbReference>
<dbReference type="PDB" id="6B4V">
    <property type="method" value="X-ray"/>
    <property type="resolution" value="3.40 A"/>
    <property type="chains" value="MA/QC=1-209"/>
</dbReference>
<dbReference type="PDB" id="6BOH">
    <property type="method" value="X-ray"/>
    <property type="resolution" value="3.40 A"/>
    <property type="chains" value="NA/SC=1-209"/>
</dbReference>
<dbReference type="PDB" id="6BOK">
    <property type="method" value="X-ray"/>
    <property type="resolution" value="3.55 A"/>
    <property type="chains" value="LA/OC=1-209"/>
</dbReference>
<dbReference type="PDB" id="6N1D">
    <property type="method" value="X-ray"/>
    <property type="resolution" value="3.20 A"/>
    <property type="chains" value="AS04/BS04=2-209"/>
</dbReference>
<dbReference type="PDBsum" id="4KVB"/>
<dbReference type="PDBsum" id="4V4I"/>
<dbReference type="PDBsum" id="4V4J"/>
<dbReference type="PDBsum" id="4V63"/>
<dbReference type="PDBsum" id="4V67"/>
<dbReference type="PDBsum" id="4V7P"/>
<dbReference type="PDBsum" id="4V83"/>
<dbReference type="PDBsum" id="4V84"/>
<dbReference type="PDBsum" id="4V9J"/>
<dbReference type="PDBsum" id="4V9K"/>
<dbReference type="PDBsum" id="4V9L"/>
<dbReference type="PDBsum" id="4V9M"/>
<dbReference type="PDBsum" id="4V9N"/>
<dbReference type="PDBsum" id="4V9Q"/>
<dbReference type="PDBsum" id="4W29"/>
<dbReference type="PDBsum" id="4XEJ"/>
<dbReference type="PDBsum" id="5J4D"/>
<dbReference type="PDBsum" id="5V8I"/>
<dbReference type="PDBsum" id="6B4V"/>
<dbReference type="PDBsum" id="6BOH"/>
<dbReference type="PDBsum" id="6BOK"/>
<dbReference type="PDBsum" id="6N1D"/>
<dbReference type="SMR" id="P62664"/>
<dbReference type="IntAct" id="P62664">
    <property type="interactions" value="4"/>
</dbReference>
<dbReference type="GeneID" id="3168006"/>
<dbReference type="KEGG" id="tth:TT_C1301"/>
<dbReference type="eggNOG" id="COG0522">
    <property type="taxonomic scope" value="Bacteria"/>
</dbReference>
<dbReference type="HOGENOM" id="CLU_092403_0_1_0"/>
<dbReference type="OrthoDB" id="9803672at2"/>
<dbReference type="EvolutionaryTrace" id="P62664"/>
<dbReference type="Proteomes" id="UP000000592">
    <property type="component" value="Chromosome"/>
</dbReference>
<dbReference type="GO" id="GO:0015935">
    <property type="term" value="C:small ribosomal subunit"/>
    <property type="evidence" value="ECO:0007669"/>
    <property type="project" value="InterPro"/>
</dbReference>
<dbReference type="GO" id="GO:0019843">
    <property type="term" value="F:rRNA binding"/>
    <property type="evidence" value="ECO:0007669"/>
    <property type="project" value="UniProtKB-UniRule"/>
</dbReference>
<dbReference type="GO" id="GO:0003735">
    <property type="term" value="F:structural constituent of ribosome"/>
    <property type="evidence" value="ECO:0007669"/>
    <property type="project" value="InterPro"/>
</dbReference>
<dbReference type="GO" id="GO:0008270">
    <property type="term" value="F:zinc ion binding"/>
    <property type="evidence" value="ECO:0007669"/>
    <property type="project" value="UniProtKB-KW"/>
</dbReference>
<dbReference type="GO" id="GO:0042274">
    <property type="term" value="P:ribosomal small subunit biogenesis"/>
    <property type="evidence" value="ECO:0007669"/>
    <property type="project" value="TreeGrafter"/>
</dbReference>
<dbReference type="GO" id="GO:0006412">
    <property type="term" value="P:translation"/>
    <property type="evidence" value="ECO:0007669"/>
    <property type="project" value="UniProtKB-UniRule"/>
</dbReference>
<dbReference type="CDD" id="cd00165">
    <property type="entry name" value="S4"/>
    <property type="match status" value="1"/>
</dbReference>
<dbReference type="FunFam" id="1.10.1050.10:FF:000001">
    <property type="entry name" value="30S ribosomal protein S4"/>
    <property type="match status" value="1"/>
</dbReference>
<dbReference type="FunFam" id="3.10.290.10:FF:000001">
    <property type="entry name" value="30S ribosomal protein S4"/>
    <property type="match status" value="1"/>
</dbReference>
<dbReference type="Gene3D" id="1.10.1050.10">
    <property type="entry name" value="Ribosomal Protein S4 Delta 41, Chain A, domain 1"/>
    <property type="match status" value="1"/>
</dbReference>
<dbReference type="Gene3D" id="3.10.290.10">
    <property type="entry name" value="RNA-binding S4 domain"/>
    <property type="match status" value="1"/>
</dbReference>
<dbReference type="HAMAP" id="MF_01306_B">
    <property type="entry name" value="Ribosomal_uS4_B"/>
    <property type="match status" value="1"/>
</dbReference>
<dbReference type="InterPro" id="IPR022801">
    <property type="entry name" value="Ribosomal_uS4"/>
</dbReference>
<dbReference type="InterPro" id="IPR005709">
    <property type="entry name" value="Ribosomal_uS4_bac-type"/>
</dbReference>
<dbReference type="InterPro" id="IPR018079">
    <property type="entry name" value="Ribosomal_uS4_CS"/>
</dbReference>
<dbReference type="InterPro" id="IPR001912">
    <property type="entry name" value="Ribosomal_uS4_N"/>
</dbReference>
<dbReference type="InterPro" id="IPR002942">
    <property type="entry name" value="S4_RNA-bd"/>
</dbReference>
<dbReference type="InterPro" id="IPR036986">
    <property type="entry name" value="S4_RNA-bd_sf"/>
</dbReference>
<dbReference type="NCBIfam" id="NF003717">
    <property type="entry name" value="PRK05327.1"/>
    <property type="match status" value="1"/>
</dbReference>
<dbReference type="NCBIfam" id="TIGR01017">
    <property type="entry name" value="rpsD_bact"/>
    <property type="match status" value="1"/>
</dbReference>
<dbReference type="PANTHER" id="PTHR11831">
    <property type="entry name" value="30S 40S RIBOSOMAL PROTEIN"/>
    <property type="match status" value="1"/>
</dbReference>
<dbReference type="PANTHER" id="PTHR11831:SF4">
    <property type="entry name" value="SMALL RIBOSOMAL SUBUNIT PROTEIN US4M"/>
    <property type="match status" value="1"/>
</dbReference>
<dbReference type="Pfam" id="PF00163">
    <property type="entry name" value="Ribosomal_S4"/>
    <property type="match status" value="1"/>
</dbReference>
<dbReference type="Pfam" id="PF01479">
    <property type="entry name" value="S4"/>
    <property type="match status" value="1"/>
</dbReference>
<dbReference type="SMART" id="SM01390">
    <property type="entry name" value="Ribosomal_S4"/>
    <property type="match status" value="1"/>
</dbReference>
<dbReference type="SMART" id="SM00363">
    <property type="entry name" value="S4"/>
    <property type="match status" value="1"/>
</dbReference>
<dbReference type="SUPFAM" id="SSF55174">
    <property type="entry name" value="Alpha-L RNA-binding motif"/>
    <property type="match status" value="1"/>
</dbReference>
<dbReference type="PROSITE" id="PS00632">
    <property type="entry name" value="RIBOSOMAL_S4"/>
    <property type="match status" value="1"/>
</dbReference>
<dbReference type="PROSITE" id="PS50889">
    <property type="entry name" value="S4"/>
    <property type="match status" value="1"/>
</dbReference>
<organism>
    <name type="scientific">Thermus thermophilus (strain ATCC BAA-163 / DSM 7039 / HB27)</name>
    <dbReference type="NCBI Taxonomy" id="262724"/>
    <lineage>
        <taxon>Bacteria</taxon>
        <taxon>Thermotogati</taxon>
        <taxon>Deinococcota</taxon>
        <taxon>Deinococci</taxon>
        <taxon>Thermales</taxon>
        <taxon>Thermaceae</taxon>
        <taxon>Thermus</taxon>
    </lineage>
</organism>
<feature type="initiator methionine" description="Removed" evidence="1">
    <location>
        <position position="1"/>
    </location>
</feature>
<feature type="chain" id="PRO_0000132482" description="Small ribosomal subunit protein uS4">
    <location>
        <begin position="2"/>
        <end position="209"/>
    </location>
</feature>
<feature type="domain" description="S4 RNA-binding">
    <location>
        <begin position="100"/>
        <end position="162"/>
    </location>
</feature>
<feature type="zinc finger region" description="C4-type">
    <location>
        <begin position="9"/>
        <end position="31"/>
    </location>
</feature>
<feature type="binding site" evidence="1">
    <location>
        <position position="9"/>
    </location>
    <ligand>
        <name>Zn(2+)</name>
        <dbReference type="ChEBI" id="CHEBI:29105"/>
    </ligand>
</feature>
<feature type="binding site" evidence="1">
    <location>
        <position position="12"/>
    </location>
    <ligand>
        <name>Zn(2+)</name>
        <dbReference type="ChEBI" id="CHEBI:29105"/>
    </ligand>
</feature>
<feature type="binding site" evidence="1">
    <location>
        <position position="26"/>
    </location>
    <ligand>
        <name>Zn(2+)</name>
        <dbReference type="ChEBI" id="CHEBI:29105"/>
    </ligand>
</feature>
<feature type="binding site" evidence="1">
    <location>
        <position position="31"/>
    </location>
    <ligand>
        <name>Zn(2+)</name>
        <dbReference type="ChEBI" id="CHEBI:29105"/>
    </ligand>
</feature>
<feature type="turn" evidence="4">
    <location>
        <begin position="9"/>
        <end position="11"/>
    </location>
</feature>
<feature type="helix" evidence="4">
    <location>
        <begin position="12"/>
        <end position="15"/>
    </location>
</feature>
<feature type="helix" evidence="4">
    <location>
        <begin position="24"/>
        <end position="27"/>
    </location>
</feature>
<feature type="turn" evidence="4">
    <location>
        <begin position="33"/>
        <end position="35"/>
    </location>
</feature>
<feature type="turn" evidence="4">
    <location>
        <begin position="41"/>
        <end position="43"/>
    </location>
</feature>
<feature type="strand" evidence="4">
    <location>
        <begin position="44"/>
        <end position="46"/>
    </location>
</feature>
<feature type="helix" evidence="4">
    <location>
        <begin position="53"/>
        <end position="68"/>
    </location>
</feature>
<feature type="helix" evidence="4">
    <location>
        <begin position="72"/>
        <end position="84"/>
    </location>
</feature>
<feature type="strand" evidence="4">
    <location>
        <begin position="85"/>
        <end position="87"/>
    </location>
</feature>
<feature type="helix" evidence="4">
    <location>
        <begin position="89"/>
        <end position="99"/>
    </location>
</feature>
<feature type="helix" evidence="4">
    <location>
        <begin position="101"/>
        <end position="107"/>
    </location>
</feature>
<feature type="strand" evidence="3">
    <location>
        <begin position="109"/>
        <end position="113"/>
    </location>
</feature>
<feature type="helix" evidence="4">
    <location>
        <begin position="114"/>
        <end position="122"/>
    </location>
</feature>
<feature type="strand" evidence="4">
    <location>
        <begin position="126"/>
        <end position="132"/>
    </location>
</feature>
<feature type="strand" evidence="4">
    <location>
        <begin position="145"/>
        <end position="148"/>
    </location>
</feature>
<feature type="helix" evidence="4">
    <location>
        <begin position="150"/>
        <end position="153"/>
    </location>
</feature>
<feature type="helix" evidence="4">
    <location>
        <begin position="156"/>
        <end position="163"/>
    </location>
</feature>
<feature type="strand" evidence="5">
    <location>
        <begin position="165"/>
        <end position="167"/>
    </location>
</feature>
<feature type="strand" evidence="4">
    <location>
        <begin position="174"/>
        <end position="177"/>
    </location>
</feature>
<feature type="turn" evidence="4">
    <location>
        <begin position="178"/>
        <end position="181"/>
    </location>
</feature>
<feature type="strand" evidence="4">
    <location>
        <begin position="182"/>
        <end position="185"/>
    </location>
</feature>
<feature type="helix" evidence="4">
    <location>
        <begin position="191"/>
        <end position="193"/>
    </location>
</feature>
<feature type="helix" evidence="4">
    <location>
        <begin position="200"/>
        <end position="206"/>
    </location>
</feature>
<accession>P62664</accession>
<sequence>MGRYIGPVCRLCRREGVKLYLKGERCYSPKCAMERRPYPPGQHGQKRARRPSDYAVRLREKQKLRRIYGISERQFRNLFEEASKKKGVTGSVFLGLLESRLDNVVYRLGFAVSRRQARQLVRHGHITVNGRRVDLPSYRVRPGDEIAVAEKSRNLELIRQNLEAMKGRKVGPWLSLDVEGMKGKFLRLPDREDLALPVNEQLVIEFYSR</sequence>
<reference key="1">
    <citation type="journal article" date="2004" name="Nat. Biotechnol.">
        <title>The genome sequence of the extreme thermophile Thermus thermophilus.</title>
        <authorList>
            <person name="Henne A."/>
            <person name="Brueggemann H."/>
            <person name="Raasch C."/>
            <person name="Wiezer A."/>
            <person name="Hartsch T."/>
            <person name="Liesegang H."/>
            <person name="Johann A."/>
            <person name="Lienard T."/>
            <person name="Gohl O."/>
            <person name="Martinez-Arias R."/>
            <person name="Jacobi C."/>
            <person name="Starkuviene V."/>
            <person name="Schlenczeck S."/>
            <person name="Dencker S."/>
            <person name="Huber R."/>
            <person name="Klenk H.-P."/>
            <person name="Kramer W."/>
            <person name="Merkl R."/>
            <person name="Gottschalk G."/>
            <person name="Fritz H.-J."/>
        </authorList>
    </citation>
    <scope>NUCLEOTIDE SEQUENCE [LARGE SCALE GENOMIC DNA]</scope>
    <source>
        <strain>ATCC BAA-163 / DSM 7039 / HB27</strain>
    </source>
</reference>
<gene>
    <name type="primary">rpsD</name>
    <name type="synonym">rps4</name>
    <name type="ordered locus">TT_C1301</name>
</gene>
<protein>
    <recommendedName>
        <fullName evidence="2">Small ribosomal subunit protein uS4</fullName>
    </recommendedName>
    <alternativeName>
        <fullName>30S ribosomal protein S4</fullName>
    </alternativeName>
</protein>
<evidence type="ECO:0000250" key="1"/>
<evidence type="ECO:0000305" key="2"/>
<evidence type="ECO:0007829" key="3">
    <source>
        <dbReference type="PDB" id="4V63"/>
    </source>
</evidence>
<evidence type="ECO:0007829" key="4">
    <source>
        <dbReference type="PDB" id="4V67"/>
    </source>
</evidence>
<evidence type="ECO:0007829" key="5">
    <source>
        <dbReference type="PDB" id="4V84"/>
    </source>
</evidence>